<protein>
    <recommendedName>
        <fullName evidence="1">Membrane-bound lytic murein transglycosylase C</fullName>
        <ecNumber evidence="1">4.2.2.n1</ecNumber>
    </recommendedName>
    <alternativeName>
        <fullName evidence="1">Murein lyase C</fullName>
    </alternativeName>
</protein>
<gene>
    <name evidence="1" type="primary">mltC</name>
    <name type="ordered locus">HD_2002</name>
</gene>
<feature type="signal peptide" evidence="1">
    <location>
        <begin position="1"/>
        <end position="19"/>
    </location>
</feature>
<feature type="chain" id="PRO_0000032789" description="Membrane-bound lytic murein transglycosylase C">
    <location>
        <begin position="20"/>
        <end position="367"/>
    </location>
</feature>
<feature type="lipid moiety-binding region" description="N-palmitoyl cysteine" evidence="1">
    <location>
        <position position="20"/>
    </location>
</feature>
<feature type="lipid moiety-binding region" description="S-diacylglycerol cysteine" evidence="1">
    <location>
        <position position="20"/>
    </location>
</feature>
<comment type="function">
    <text evidence="1">Murein-degrading enzyme. May play a role in recycling of muropeptides during cell elongation and/or cell division.</text>
</comment>
<comment type="catalytic activity">
    <reaction evidence="1">
        <text>Exolytic cleavage of the (1-&gt;4)-beta-glycosidic linkage between N-acetylmuramic acid (MurNAc) and N-acetylglucosamine (GlcNAc) residues in peptidoglycan, from either the reducing or the non-reducing ends of the peptidoglycan chains, with concomitant formation of a 1,6-anhydrobond in the MurNAc residue.</text>
        <dbReference type="EC" id="4.2.2.n1"/>
    </reaction>
</comment>
<comment type="subcellular location">
    <subcellularLocation>
        <location evidence="1">Cell outer membrane</location>
        <topology evidence="1">Lipid-anchor</topology>
    </subcellularLocation>
</comment>
<comment type="similarity">
    <text evidence="1">Belongs to the transglycosylase Slt family.</text>
</comment>
<name>MLTC_HAEDU</name>
<reference key="1">
    <citation type="submission" date="2003-06" db="EMBL/GenBank/DDBJ databases">
        <title>The complete genome sequence of Haemophilus ducreyi.</title>
        <authorList>
            <person name="Munson R.S. Jr."/>
            <person name="Ray W.C."/>
            <person name="Mahairas G."/>
            <person name="Sabo P."/>
            <person name="Mungur R."/>
            <person name="Johnson L."/>
            <person name="Nguyen D."/>
            <person name="Wang J."/>
            <person name="Forst C."/>
            <person name="Hood L."/>
        </authorList>
    </citation>
    <scope>NUCLEOTIDE SEQUENCE [LARGE SCALE GENOMIC DNA]</scope>
    <source>
        <strain>35000HP / ATCC 700724</strain>
    </source>
</reference>
<dbReference type="EC" id="4.2.2.n1" evidence="1"/>
<dbReference type="EMBL" id="AE017143">
    <property type="protein sequence ID" value="AAP96715.1"/>
    <property type="molecule type" value="Genomic_DNA"/>
</dbReference>
<dbReference type="RefSeq" id="WP_010945736.1">
    <property type="nucleotide sequence ID" value="NC_002940.2"/>
</dbReference>
<dbReference type="SMR" id="Q7VKB7"/>
<dbReference type="STRING" id="233412.HD_2002"/>
<dbReference type="CAZy" id="GH23">
    <property type="family name" value="Glycoside Hydrolase Family 23"/>
</dbReference>
<dbReference type="KEGG" id="hdu:HD_2002"/>
<dbReference type="eggNOG" id="COG0741">
    <property type="taxonomic scope" value="Bacteria"/>
</dbReference>
<dbReference type="HOGENOM" id="CLU_044583_0_0_6"/>
<dbReference type="OrthoDB" id="5620293at2"/>
<dbReference type="Proteomes" id="UP000001022">
    <property type="component" value="Chromosome"/>
</dbReference>
<dbReference type="GO" id="GO:0009279">
    <property type="term" value="C:cell outer membrane"/>
    <property type="evidence" value="ECO:0007669"/>
    <property type="project" value="UniProtKB-SubCell"/>
</dbReference>
<dbReference type="GO" id="GO:0016798">
    <property type="term" value="F:hydrolase activity, acting on glycosyl bonds"/>
    <property type="evidence" value="ECO:0007669"/>
    <property type="project" value="InterPro"/>
</dbReference>
<dbReference type="GO" id="GO:0008933">
    <property type="term" value="F:peptidoglycan lytic transglycosylase activity"/>
    <property type="evidence" value="ECO:0007669"/>
    <property type="project" value="UniProtKB-UniRule"/>
</dbReference>
<dbReference type="GO" id="GO:0016998">
    <property type="term" value="P:cell wall macromolecule catabolic process"/>
    <property type="evidence" value="ECO:0007669"/>
    <property type="project" value="UniProtKB-UniRule"/>
</dbReference>
<dbReference type="GO" id="GO:0071555">
    <property type="term" value="P:cell wall organization"/>
    <property type="evidence" value="ECO:0007669"/>
    <property type="project" value="UniProtKB-KW"/>
</dbReference>
<dbReference type="GO" id="GO:0000270">
    <property type="term" value="P:peptidoglycan metabolic process"/>
    <property type="evidence" value="ECO:0007669"/>
    <property type="project" value="InterPro"/>
</dbReference>
<dbReference type="CDD" id="cd16893">
    <property type="entry name" value="LT_MltC_MltE"/>
    <property type="match status" value="1"/>
</dbReference>
<dbReference type="Gene3D" id="1.10.530.10">
    <property type="match status" value="1"/>
</dbReference>
<dbReference type="HAMAP" id="MF_01616">
    <property type="entry name" value="MltC"/>
    <property type="match status" value="1"/>
</dbReference>
<dbReference type="InterPro" id="IPR023346">
    <property type="entry name" value="Lysozyme-like_dom_sf"/>
</dbReference>
<dbReference type="InterPro" id="IPR023664">
    <property type="entry name" value="Murein_transglycosylaseC"/>
</dbReference>
<dbReference type="InterPro" id="IPR024570">
    <property type="entry name" value="Murein_transglycosylaseC_N"/>
</dbReference>
<dbReference type="InterPro" id="IPR000189">
    <property type="entry name" value="Transglyc_AS"/>
</dbReference>
<dbReference type="InterPro" id="IPR008258">
    <property type="entry name" value="Transglycosylase_SLT_dom_1"/>
</dbReference>
<dbReference type="NCBIfam" id="NF008670">
    <property type="entry name" value="PRK11671.1"/>
    <property type="match status" value="1"/>
</dbReference>
<dbReference type="PANTHER" id="PTHR37423:SF2">
    <property type="entry name" value="MEMBRANE-BOUND LYTIC MUREIN TRANSGLYCOSYLASE C"/>
    <property type="match status" value="1"/>
</dbReference>
<dbReference type="PANTHER" id="PTHR37423">
    <property type="entry name" value="SOLUBLE LYTIC MUREIN TRANSGLYCOSYLASE-RELATED"/>
    <property type="match status" value="1"/>
</dbReference>
<dbReference type="Pfam" id="PF11873">
    <property type="entry name" value="Mltc_N"/>
    <property type="match status" value="1"/>
</dbReference>
<dbReference type="Pfam" id="PF01464">
    <property type="entry name" value="SLT"/>
    <property type="match status" value="1"/>
</dbReference>
<dbReference type="SUPFAM" id="SSF53955">
    <property type="entry name" value="Lysozyme-like"/>
    <property type="match status" value="1"/>
</dbReference>
<dbReference type="PROSITE" id="PS51257">
    <property type="entry name" value="PROKAR_LIPOPROTEIN"/>
    <property type="match status" value="1"/>
</dbReference>
<dbReference type="PROSITE" id="PS00922">
    <property type="entry name" value="TRANSGLYCOSYLASE"/>
    <property type="match status" value="1"/>
</dbReference>
<proteinExistence type="inferred from homology"/>
<sequence>MRKYAKYLPFCLVVPFLAACSSKSTTSAKGKKIKSPFNYLSKDTNGLDILTGQFSHNIDDIWGSNELLVASKKDYVKYTDKYYTRSHISFEDGLITIETLGNQNHLRNSIIHTLLMGADPRGIDLFNSGDTPISKKPFLARQVKDQFGRDIINVAIANDFASHLLQRQLKTRRLQNGRTVTYVTIKMVADHVEVRARKYLPLVRKMAKRYGIETSLIFGIMEVESSFNPYAVSYANAIGLMQVVPRTAGRDIFVRKGMSGQPDRAYLHEPANNIDAGTLYLAILRNEYLDGINDPVSKRYAIISAYNSGAGAVLKVFDADRTSAFNRINQLSSDAVYRVLATAHPSKQARNYLNKVSKARQKYINIR</sequence>
<keyword id="KW-0998">Cell outer membrane</keyword>
<keyword id="KW-0961">Cell wall biogenesis/degradation</keyword>
<keyword id="KW-0449">Lipoprotein</keyword>
<keyword id="KW-0456">Lyase</keyword>
<keyword id="KW-0472">Membrane</keyword>
<keyword id="KW-0564">Palmitate</keyword>
<keyword id="KW-1185">Reference proteome</keyword>
<keyword id="KW-0732">Signal</keyword>
<organism>
    <name type="scientific">Haemophilus ducreyi (strain 35000HP / ATCC 700724)</name>
    <dbReference type="NCBI Taxonomy" id="233412"/>
    <lineage>
        <taxon>Bacteria</taxon>
        <taxon>Pseudomonadati</taxon>
        <taxon>Pseudomonadota</taxon>
        <taxon>Gammaproteobacteria</taxon>
        <taxon>Pasteurellales</taxon>
        <taxon>Pasteurellaceae</taxon>
        <taxon>Haemophilus</taxon>
    </lineage>
</organism>
<evidence type="ECO:0000255" key="1">
    <source>
        <dbReference type="HAMAP-Rule" id="MF_01616"/>
    </source>
</evidence>
<accession>Q7VKB7</accession>